<protein>
    <recommendedName>
        <fullName evidence="2">Formamidopyrimidine-DNA glycosylase</fullName>
        <shortName evidence="2">Fapy-DNA glycosylase</shortName>
        <ecNumber evidence="2">3.2.2.23</ecNumber>
    </recommendedName>
    <alternativeName>
        <fullName evidence="2">DNA-(apurinic or apyrimidinic site) lyase MutM</fullName>
        <shortName evidence="2">AP lyase MutM</shortName>
        <ecNumber evidence="2">4.2.99.18</ecNumber>
    </alternativeName>
</protein>
<proteinExistence type="inferred from homology"/>
<gene>
    <name evidence="2" type="primary">mutM</name>
    <name evidence="2" type="synonym">fpg</name>
    <name type="ordered locus">Rpic_0254</name>
</gene>
<dbReference type="EC" id="3.2.2.23" evidence="2"/>
<dbReference type="EC" id="4.2.99.18" evidence="2"/>
<dbReference type="EMBL" id="CP001068">
    <property type="protein sequence ID" value="ACD25416.1"/>
    <property type="molecule type" value="Genomic_DNA"/>
</dbReference>
<dbReference type="SMR" id="B2UES0"/>
<dbReference type="STRING" id="402626.Rpic_0254"/>
<dbReference type="KEGG" id="rpi:Rpic_0254"/>
<dbReference type="eggNOG" id="COG0266">
    <property type="taxonomic scope" value="Bacteria"/>
</dbReference>
<dbReference type="HOGENOM" id="CLU_038423_1_1_4"/>
<dbReference type="GO" id="GO:0034039">
    <property type="term" value="F:8-oxo-7,8-dihydroguanine DNA N-glycosylase activity"/>
    <property type="evidence" value="ECO:0007669"/>
    <property type="project" value="TreeGrafter"/>
</dbReference>
<dbReference type="GO" id="GO:0140078">
    <property type="term" value="F:class I DNA-(apurinic or apyrimidinic site) endonuclease activity"/>
    <property type="evidence" value="ECO:0007669"/>
    <property type="project" value="UniProtKB-EC"/>
</dbReference>
<dbReference type="GO" id="GO:0003684">
    <property type="term" value="F:damaged DNA binding"/>
    <property type="evidence" value="ECO:0007669"/>
    <property type="project" value="InterPro"/>
</dbReference>
<dbReference type="GO" id="GO:0008270">
    <property type="term" value="F:zinc ion binding"/>
    <property type="evidence" value="ECO:0007669"/>
    <property type="project" value="UniProtKB-UniRule"/>
</dbReference>
<dbReference type="GO" id="GO:0006284">
    <property type="term" value="P:base-excision repair"/>
    <property type="evidence" value="ECO:0007669"/>
    <property type="project" value="InterPro"/>
</dbReference>
<dbReference type="CDD" id="cd08966">
    <property type="entry name" value="EcFpg-like_N"/>
    <property type="match status" value="1"/>
</dbReference>
<dbReference type="FunFam" id="1.10.8.50:FF:000003">
    <property type="entry name" value="Formamidopyrimidine-DNA glycosylase"/>
    <property type="match status" value="1"/>
</dbReference>
<dbReference type="Gene3D" id="1.10.8.50">
    <property type="match status" value="1"/>
</dbReference>
<dbReference type="Gene3D" id="3.20.190.10">
    <property type="entry name" value="MutM-like, N-terminal"/>
    <property type="match status" value="1"/>
</dbReference>
<dbReference type="HAMAP" id="MF_00103">
    <property type="entry name" value="Fapy_DNA_glycosyl"/>
    <property type="match status" value="1"/>
</dbReference>
<dbReference type="InterPro" id="IPR015886">
    <property type="entry name" value="DNA_glyclase/AP_lyase_DNA-bd"/>
</dbReference>
<dbReference type="InterPro" id="IPR020629">
    <property type="entry name" value="Formamido-pyr_DNA_Glyclase"/>
</dbReference>
<dbReference type="InterPro" id="IPR012319">
    <property type="entry name" value="FPG_cat"/>
</dbReference>
<dbReference type="InterPro" id="IPR035937">
    <property type="entry name" value="MutM-like_N-ter"/>
</dbReference>
<dbReference type="InterPro" id="IPR010979">
    <property type="entry name" value="Ribosomal_uS13-like_H2TH"/>
</dbReference>
<dbReference type="InterPro" id="IPR000214">
    <property type="entry name" value="Znf_DNA_glyclase/AP_lyase"/>
</dbReference>
<dbReference type="InterPro" id="IPR010663">
    <property type="entry name" value="Znf_FPG/IleRS"/>
</dbReference>
<dbReference type="NCBIfam" id="TIGR00577">
    <property type="entry name" value="fpg"/>
    <property type="match status" value="1"/>
</dbReference>
<dbReference type="NCBIfam" id="NF002211">
    <property type="entry name" value="PRK01103.1"/>
    <property type="match status" value="1"/>
</dbReference>
<dbReference type="PANTHER" id="PTHR22993">
    <property type="entry name" value="FORMAMIDOPYRIMIDINE-DNA GLYCOSYLASE"/>
    <property type="match status" value="1"/>
</dbReference>
<dbReference type="PANTHER" id="PTHR22993:SF9">
    <property type="entry name" value="FORMAMIDOPYRIMIDINE-DNA GLYCOSYLASE"/>
    <property type="match status" value="1"/>
</dbReference>
<dbReference type="Pfam" id="PF01149">
    <property type="entry name" value="Fapy_DNA_glyco"/>
    <property type="match status" value="1"/>
</dbReference>
<dbReference type="Pfam" id="PF06831">
    <property type="entry name" value="H2TH"/>
    <property type="match status" value="1"/>
</dbReference>
<dbReference type="Pfam" id="PF06827">
    <property type="entry name" value="zf-FPG_IleRS"/>
    <property type="match status" value="1"/>
</dbReference>
<dbReference type="SMART" id="SM00898">
    <property type="entry name" value="Fapy_DNA_glyco"/>
    <property type="match status" value="1"/>
</dbReference>
<dbReference type="SMART" id="SM01232">
    <property type="entry name" value="H2TH"/>
    <property type="match status" value="1"/>
</dbReference>
<dbReference type="SUPFAM" id="SSF57716">
    <property type="entry name" value="Glucocorticoid receptor-like (DNA-binding domain)"/>
    <property type="match status" value="1"/>
</dbReference>
<dbReference type="SUPFAM" id="SSF81624">
    <property type="entry name" value="N-terminal domain of MutM-like DNA repair proteins"/>
    <property type="match status" value="1"/>
</dbReference>
<dbReference type="SUPFAM" id="SSF46946">
    <property type="entry name" value="S13-like H2TH domain"/>
    <property type="match status" value="1"/>
</dbReference>
<dbReference type="PROSITE" id="PS51068">
    <property type="entry name" value="FPG_CAT"/>
    <property type="match status" value="1"/>
</dbReference>
<dbReference type="PROSITE" id="PS51066">
    <property type="entry name" value="ZF_FPG_2"/>
    <property type="match status" value="1"/>
</dbReference>
<feature type="initiator methionine" description="Removed" evidence="1">
    <location>
        <position position="1"/>
    </location>
</feature>
<feature type="chain" id="PRO_1000094065" description="Formamidopyrimidine-DNA glycosylase">
    <location>
        <begin position="2"/>
        <end position="291"/>
    </location>
</feature>
<feature type="zinc finger region" description="FPG-type" evidence="2">
    <location>
        <begin position="257"/>
        <end position="291"/>
    </location>
</feature>
<feature type="active site" description="Schiff-base intermediate with DNA" evidence="2">
    <location>
        <position position="2"/>
    </location>
</feature>
<feature type="active site" description="Proton donor" evidence="2">
    <location>
        <position position="3"/>
    </location>
</feature>
<feature type="active site" description="Proton donor; for beta-elimination activity" evidence="2">
    <location>
        <position position="58"/>
    </location>
</feature>
<feature type="active site" description="Proton donor; for delta-elimination activity" evidence="2">
    <location>
        <position position="281"/>
    </location>
</feature>
<feature type="binding site" evidence="2">
    <location>
        <position position="104"/>
    </location>
    <ligand>
        <name>DNA</name>
        <dbReference type="ChEBI" id="CHEBI:16991"/>
    </ligand>
</feature>
<feature type="binding site" evidence="2">
    <location>
        <position position="127"/>
    </location>
    <ligand>
        <name>DNA</name>
        <dbReference type="ChEBI" id="CHEBI:16991"/>
    </ligand>
</feature>
<feature type="binding site" evidence="2">
    <location>
        <position position="172"/>
    </location>
    <ligand>
        <name>DNA</name>
        <dbReference type="ChEBI" id="CHEBI:16991"/>
    </ligand>
</feature>
<reference key="1">
    <citation type="submission" date="2008-05" db="EMBL/GenBank/DDBJ databases">
        <title>Complete sequence of chromosome 1 of Ralstonia pickettii 12J.</title>
        <authorList>
            <person name="Lucas S."/>
            <person name="Copeland A."/>
            <person name="Lapidus A."/>
            <person name="Glavina del Rio T."/>
            <person name="Dalin E."/>
            <person name="Tice H."/>
            <person name="Bruce D."/>
            <person name="Goodwin L."/>
            <person name="Pitluck S."/>
            <person name="Meincke L."/>
            <person name="Brettin T."/>
            <person name="Detter J.C."/>
            <person name="Han C."/>
            <person name="Kuske C.R."/>
            <person name="Schmutz J."/>
            <person name="Larimer F."/>
            <person name="Land M."/>
            <person name="Hauser L."/>
            <person name="Kyrpides N."/>
            <person name="Mikhailova N."/>
            <person name="Marsh T."/>
            <person name="Richardson P."/>
        </authorList>
    </citation>
    <scope>NUCLEOTIDE SEQUENCE [LARGE SCALE GENOMIC DNA]</scope>
    <source>
        <strain>12J</strain>
    </source>
</reference>
<evidence type="ECO:0000250" key="1"/>
<evidence type="ECO:0000255" key="2">
    <source>
        <dbReference type="HAMAP-Rule" id="MF_00103"/>
    </source>
</evidence>
<comment type="function">
    <text evidence="2">Involved in base excision repair of DNA damaged by oxidation or by mutagenic agents. Acts as a DNA glycosylase that recognizes and removes damaged bases. Has a preference for oxidized purines, such as 7,8-dihydro-8-oxoguanine (8-oxoG). Has AP (apurinic/apyrimidinic) lyase activity and introduces nicks in the DNA strand. Cleaves the DNA backbone by beta-delta elimination to generate a single-strand break at the site of the removed base with both 3'- and 5'-phosphates.</text>
</comment>
<comment type="catalytic activity">
    <reaction evidence="2">
        <text>Hydrolysis of DNA containing ring-opened 7-methylguanine residues, releasing 2,6-diamino-4-hydroxy-5-(N-methyl)formamidopyrimidine.</text>
        <dbReference type="EC" id="3.2.2.23"/>
    </reaction>
</comment>
<comment type="catalytic activity">
    <reaction evidence="2">
        <text>2'-deoxyribonucleotide-(2'-deoxyribose 5'-phosphate)-2'-deoxyribonucleotide-DNA = a 3'-end 2'-deoxyribonucleotide-(2,3-dehydro-2,3-deoxyribose 5'-phosphate)-DNA + a 5'-end 5'-phospho-2'-deoxyribonucleoside-DNA + H(+)</text>
        <dbReference type="Rhea" id="RHEA:66592"/>
        <dbReference type="Rhea" id="RHEA-COMP:13180"/>
        <dbReference type="Rhea" id="RHEA-COMP:16897"/>
        <dbReference type="Rhea" id="RHEA-COMP:17067"/>
        <dbReference type="ChEBI" id="CHEBI:15378"/>
        <dbReference type="ChEBI" id="CHEBI:136412"/>
        <dbReference type="ChEBI" id="CHEBI:157695"/>
        <dbReference type="ChEBI" id="CHEBI:167181"/>
        <dbReference type="EC" id="4.2.99.18"/>
    </reaction>
</comment>
<comment type="cofactor">
    <cofactor evidence="2">
        <name>Zn(2+)</name>
        <dbReference type="ChEBI" id="CHEBI:29105"/>
    </cofactor>
    <text evidence="2">Binds 1 zinc ion per subunit.</text>
</comment>
<comment type="subunit">
    <text evidence="2">Monomer.</text>
</comment>
<comment type="similarity">
    <text evidence="2">Belongs to the FPG family.</text>
</comment>
<sequence length="291" mass="31777">MPELPEVEVTRLGLLPHITGRRIVRAVVRHHGLRWPVDPALPELLAGLTVTRLLRRGKYLLIECVPEVEQSGRAADTVGGWLLIHLGMTGTLRVLETPVPPGLHDHVDIELAGATGVHVTLRYRDPRRFGAVLWHAGDEAGLAEHPLLRNLGIEPFDARFDGDWMFARTRGRRVAIKSALLAGDIVVGVGNIYCSESLFRAGIRPTTAAGRISRPRYAALADAIRATLADAIARGGSTLRDFVGSDGQSGYFQLEAFVYDRAGLPCRACGTPIRQIVQGQRSTFCCPTCQR</sequence>
<accession>B2UES0</accession>
<organism>
    <name type="scientific">Ralstonia pickettii (strain 12J)</name>
    <dbReference type="NCBI Taxonomy" id="402626"/>
    <lineage>
        <taxon>Bacteria</taxon>
        <taxon>Pseudomonadati</taxon>
        <taxon>Pseudomonadota</taxon>
        <taxon>Betaproteobacteria</taxon>
        <taxon>Burkholderiales</taxon>
        <taxon>Burkholderiaceae</taxon>
        <taxon>Ralstonia</taxon>
    </lineage>
</organism>
<name>FPG_RALPJ</name>
<keyword id="KW-0227">DNA damage</keyword>
<keyword id="KW-0234">DNA repair</keyword>
<keyword id="KW-0238">DNA-binding</keyword>
<keyword id="KW-0326">Glycosidase</keyword>
<keyword id="KW-0378">Hydrolase</keyword>
<keyword id="KW-0456">Lyase</keyword>
<keyword id="KW-0479">Metal-binding</keyword>
<keyword id="KW-0511">Multifunctional enzyme</keyword>
<keyword id="KW-0862">Zinc</keyword>
<keyword id="KW-0863">Zinc-finger</keyword>